<accession>Q4FLN9</accession>
<evidence type="ECO:0000255" key="1">
    <source>
        <dbReference type="HAMAP-Rule" id="MF_01315"/>
    </source>
</evidence>
<evidence type="ECO:0000305" key="2"/>
<sequence length="127" mass="14494">MARIAGVNIPQNKLVHIGLTYIYGIGNKFSSQICTSLEIPKAKRINELTDEDILKIREYIDANFKVEGDLRRDYSLTIKRLIDLACYRGSRHRKKLPVRGQRTRCNARTRKGKAIAIAGKKLTPLKK</sequence>
<protein>
    <recommendedName>
        <fullName evidence="1">Small ribosomal subunit protein uS13</fullName>
    </recommendedName>
    <alternativeName>
        <fullName evidence="2">30S ribosomal protein S13</fullName>
    </alternativeName>
</protein>
<keyword id="KW-1185">Reference proteome</keyword>
<keyword id="KW-0687">Ribonucleoprotein</keyword>
<keyword id="KW-0689">Ribosomal protein</keyword>
<keyword id="KW-0694">RNA-binding</keyword>
<keyword id="KW-0699">rRNA-binding</keyword>
<keyword id="KW-0820">tRNA-binding</keyword>
<dbReference type="EMBL" id="CP000084">
    <property type="protein sequence ID" value="AAZ21899.1"/>
    <property type="molecule type" value="Genomic_DNA"/>
</dbReference>
<dbReference type="RefSeq" id="WP_006996832.1">
    <property type="nucleotide sequence ID" value="NC_007205.1"/>
</dbReference>
<dbReference type="SMR" id="Q4FLN9"/>
<dbReference type="STRING" id="335992.SAR11_1095"/>
<dbReference type="GeneID" id="66295585"/>
<dbReference type="KEGG" id="pub:SAR11_1095"/>
<dbReference type="eggNOG" id="COG0099">
    <property type="taxonomic scope" value="Bacteria"/>
</dbReference>
<dbReference type="HOGENOM" id="CLU_103849_1_2_5"/>
<dbReference type="OrthoDB" id="9803610at2"/>
<dbReference type="Proteomes" id="UP000002528">
    <property type="component" value="Chromosome"/>
</dbReference>
<dbReference type="GO" id="GO:0005829">
    <property type="term" value="C:cytosol"/>
    <property type="evidence" value="ECO:0007669"/>
    <property type="project" value="TreeGrafter"/>
</dbReference>
<dbReference type="GO" id="GO:0015935">
    <property type="term" value="C:small ribosomal subunit"/>
    <property type="evidence" value="ECO:0007669"/>
    <property type="project" value="TreeGrafter"/>
</dbReference>
<dbReference type="GO" id="GO:0019843">
    <property type="term" value="F:rRNA binding"/>
    <property type="evidence" value="ECO:0007669"/>
    <property type="project" value="UniProtKB-UniRule"/>
</dbReference>
<dbReference type="GO" id="GO:0003735">
    <property type="term" value="F:structural constituent of ribosome"/>
    <property type="evidence" value="ECO:0007669"/>
    <property type="project" value="InterPro"/>
</dbReference>
<dbReference type="GO" id="GO:0000049">
    <property type="term" value="F:tRNA binding"/>
    <property type="evidence" value="ECO:0007669"/>
    <property type="project" value="UniProtKB-UniRule"/>
</dbReference>
<dbReference type="GO" id="GO:0006412">
    <property type="term" value="P:translation"/>
    <property type="evidence" value="ECO:0007669"/>
    <property type="project" value="UniProtKB-UniRule"/>
</dbReference>
<dbReference type="FunFam" id="1.10.8.50:FF:000001">
    <property type="entry name" value="30S ribosomal protein S13"/>
    <property type="match status" value="1"/>
</dbReference>
<dbReference type="Gene3D" id="1.10.8.50">
    <property type="match status" value="1"/>
</dbReference>
<dbReference type="Gene3D" id="4.10.910.10">
    <property type="entry name" value="30s ribosomal protein s13, domain 2"/>
    <property type="match status" value="1"/>
</dbReference>
<dbReference type="HAMAP" id="MF_01315">
    <property type="entry name" value="Ribosomal_uS13"/>
    <property type="match status" value="1"/>
</dbReference>
<dbReference type="InterPro" id="IPR027437">
    <property type="entry name" value="Rbsml_uS13_C"/>
</dbReference>
<dbReference type="InterPro" id="IPR001892">
    <property type="entry name" value="Ribosomal_uS13"/>
</dbReference>
<dbReference type="InterPro" id="IPR010979">
    <property type="entry name" value="Ribosomal_uS13-like_H2TH"/>
</dbReference>
<dbReference type="InterPro" id="IPR019980">
    <property type="entry name" value="Ribosomal_uS13_bac-type"/>
</dbReference>
<dbReference type="InterPro" id="IPR018269">
    <property type="entry name" value="Ribosomal_uS13_CS"/>
</dbReference>
<dbReference type="NCBIfam" id="TIGR03631">
    <property type="entry name" value="uS13_bact"/>
    <property type="match status" value="1"/>
</dbReference>
<dbReference type="PANTHER" id="PTHR10871">
    <property type="entry name" value="30S RIBOSOMAL PROTEIN S13/40S RIBOSOMAL PROTEIN S18"/>
    <property type="match status" value="1"/>
</dbReference>
<dbReference type="PANTHER" id="PTHR10871:SF1">
    <property type="entry name" value="SMALL RIBOSOMAL SUBUNIT PROTEIN US13M"/>
    <property type="match status" value="1"/>
</dbReference>
<dbReference type="Pfam" id="PF00416">
    <property type="entry name" value="Ribosomal_S13"/>
    <property type="match status" value="1"/>
</dbReference>
<dbReference type="PIRSF" id="PIRSF002134">
    <property type="entry name" value="Ribosomal_S13"/>
    <property type="match status" value="1"/>
</dbReference>
<dbReference type="SUPFAM" id="SSF46946">
    <property type="entry name" value="S13-like H2TH domain"/>
    <property type="match status" value="1"/>
</dbReference>
<dbReference type="PROSITE" id="PS00646">
    <property type="entry name" value="RIBOSOMAL_S13_1"/>
    <property type="match status" value="1"/>
</dbReference>
<dbReference type="PROSITE" id="PS50159">
    <property type="entry name" value="RIBOSOMAL_S13_2"/>
    <property type="match status" value="1"/>
</dbReference>
<proteinExistence type="inferred from homology"/>
<organism>
    <name type="scientific">Pelagibacter ubique (strain HTCC1062)</name>
    <dbReference type="NCBI Taxonomy" id="335992"/>
    <lineage>
        <taxon>Bacteria</taxon>
        <taxon>Pseudomonadati</taxon>
        <taxon>Pseudomonadota</taxon>
        <taxon>Alphaproteobacteria</taxon>
        <taxon>Candidatus Pelagibacterales</taxon>
        <taxon>Candidatus Pelagibacteraceae</taxon>
        <taxon>Candidatus Pelagibacter</taxon>
    </lineage>
</organism>
<name>RS13_PELUB</name>
<reference key="1">
    <citation type="journal article" date="2005" name="Science">
        <title>Genome streamlining in a cosmopolitan oceanic bacterium.</title>
        <authorList>
            <person name="Giovannoni S.J."/>
            <person name="Tripp H.J."/>
            <person name="Givan S."/>
            <person name="Podar M."/>
            <person name="Vergin K.L."/>
            <person name="Baptista D."/>
            <person name="Bibbs L."/>
            <person name="Eads J."/>
            <person name="Richardson T.H."/>
            <person name="Noordewier M."/>
            <person name="Rappe M.S."/>
            <person name="Short J.M."/>
            <person name="Carrington J.C."/>
            <person name="Mathur E.J."/>
        </authorList>
    </citation>
    <scope>NUCLEOTIDE SEQUENCE [LARGE SCALE GENOMIC DNA]</scope>
    <source>
        <strain>HTCC1062</strain>
    </source>
</reference>
<gene>
    <name evidence="1" type="primary">rpsM</name>
    <name type="ordered locus">SAR11_1095</name>
</gene>
<feature type="chain" id="PRO_0000230538" description="Small ribosomal subunit protein uS13">
    <location>
        <begin position="1"/>
        <end position="127"/>
    </location>
</feature>
<comment type="function">
    <text evidence="1">Located at the top of the head of the 30S subunit, it contacts several helices of the 16S rRNA. In the 70S ribosome it contacts the 23S rRNA (bridge B1a) and protein L5 of the 50S subunit (bridge B1b), connecting the 2 subunits; these bridges are implicated in subunit movement. Contacts the tRNAs in the A and P-sites.</text>
</comment>
<comment type="subunit">
    <text evidence="1">Part of the 30S ribosomal subunit. Forms a loose heterodimer with protein S19. Forms two bridges to the 50S subunit in the 70S ribosome.</text>
</comment>
<comment type="similarity">
    <text evidence="1">Belongs to the universal ribosomal protein uS13 family.</text>
</comment>